<keyword id="KW-0963">Cytoplasm</keyword>
<keyword id="KW-0378">Hydrolase</keyword>
<keyword id="KW-0694">RNA-binding</keyword>
<keyword id="KW-0820">tRNA-binding</keyword>
<name>PTH_STRS2</name>
<accession>A4VYI0</accession>
<evidence type="ECO:0000255" key="1">
    <source>
        <dbReference type="HAMAP-Rule" id="MF_00083"/>
    </source>
</evidence>
<gene>
    <name evidence="1" type="primary">pth</name>
    <name type="ordered locus">SSU98_0009</name>
</gene>
<reference key="1">
    <citation type="journal article" date="2007" name="PLoS ONE">
        <title>A glimpse of streptococcal toxic shock syndrome from comparative genomics of S. suis 2 Chinese isolates.</title>
        <authorList>
            <person name="Chen C."/>
            <person name="Tang J."/>
            <person name="Dong W."/>
            <person name="Wang C."/>
            <person name="Feng Y."/>
            <person name="Wang J."/>
            <person name="Zheng F."/>
            <person name="Pan X."/>
            <person name="Liu D."/>
            <person name="Li M."/>
            <person name="Song Y."/>
            <person name="Zhu X."/>
            <person name="Sun H."/>
            <person name="Feng T."/>
            <person name="Guo Z."/>
            <person name="Ju A."/>
            <person name="Ge J."/>
            <person name="Dong Y."/>
            <person name="Sun W."/>
            <person name="Jiang Y."/>
            <person name="Wang J."/>
            <person name="Yan J."/>
            <person name="Yang H."/>
            <person name="Wang X."/>
            <person name="Gao G.F."/>
            <person name="Yang R."/>
            <person name="Wang J."/>
            <person name="Yu J."/>
        </authorList>
    </citation>
    <scope>NUCLEOTIDE SEQUENCE [LARGE SCALE GENOMIC DNA]</scope>
    <source>
        <strain>98HAH33</strain>
    </source>
</reference>
<dbReference type="EC" id="3.1.1.29" evidence="1"/>
<dbReference type="EMBL" id="CP000408">
    <property type="protein sequence ID" value="ABP91169.1"/>
    <property type="molecule type" value="Genomic_DNA"/>
</dbReference>
<dbReference type="SMR" id="A4VYI0"/>
<dbReference type="KEGG" id="ssv:SSU98_0009"/>
<dbReference type="HOGENOM" id="CLU_062456_4_1_9"/>
<dbReference type="GO" id="GO:0005737">
    <property type="term" value="C:cytoplasm"/>
    <property type="evidence" value="ECO:0007669"/>
    <property type="project" value="UniProtKB-SubCell"/>
</dbReference>
<dbReference type="GO" id="GO:0004045">
    <property type="term" value="F:peptidyl-tRNA hydrolase activity"/>
    <property type="evidence" value="ECO:0007669"/>
    <property type="project" value="UniProtKB-UniRule"/>
</dbReference>
<dbReference type="GO" id="GO:0000049">
    <property type="term" value="F:tRNA binding"/>
    <property type="evidence" value="ECO:0007669"/>
    <property type="project" value="UniProtKB-UniRule"/>
</dbReference>
<dbReference type="GO" id="GO:0006515">
    <property type="term" value="P:protein quality control for misfolded or incompletely synthesized proteins"/>
    <property type="evidence" value="ECO:0007669"/>
    <property type="project" value="UniProtKB-UniRule"/>
</dbReference>
<dbReference type="GO" id="GO:0072344">
    <property type="term" value="P:rescue of stalled ribosome"/>
    <property type="evidence" value="ECO:0007669"/>
    <property type="project" value="UniProtKB-UniRule"/>
</dbReference>
<dbReference type="CDD" id="cd00462">
    <property type="entry name" value="PTH"/>
    <property type="match status" value="1"/>
</dbReference>
<dbReference type="FunFam" id="3.40.50.1470:FF:000001">
    <property type="entry name" value="Peptidyl-tRNA hydrolase"/>
    <property type="match status" value="1"/>
</dbReference>
<dbReference type="Gene3D" id="3.40.50.1470">
    <property type="entry name" value="Peptidyl-tRNA hydrolase"/>
    <property type="match status" value="1"/>
</dbReference>
<dbReference type="HAMAP" id="MF_00083">
    <property type="entry name" value="Pept_tRNA_hydro_bact"/>
    <property type="match status" value="1"/>
</dbReference>
<dbReference type="InterPro" id="IPR001328">
    <property type="entry name" value="Pept_tRNA_hydro"/>
</dbReference>
<dbReference type="InterPro" id="IPR018171">
    <property type="entry name" value="Pept_tRNA_hydro_CS"/>
</dbReference>
<dbReference type="InterPro" id="IPR036416">
    <property type="entry name" value="Pept_tRNA_hydro_sf"/>
</dbReference>
<dbReference type="NCBIfam" id="TIGR00447">
    <property type="entry name" value="pth"/>
    <property type="match status" value="1"/>
</dbReference>
<dbReference type="PANTHER" id="PTHR17224">
    <property type="entry name" value="PEPTIDYL-TRNA HYDROLASE"/>
    <property type="match status" value="1"/>
</dbReference>
<dbReference type="PANTHER" id="PTHR17224:SF1">
    <property type="entry name" value="PEPTIDYL-TRNA HYDROLASE"/>
    <property type="match status" value="1"/>
</dbReference>
<dbReference type="Pfam" id="PF01195">
    <property type="entry name" value="Pept_tRNA_hydro"/>
    <property type="match status" value="1"/>
</dbReference>
<dbReference type="SUPFAM" id="SSF53178">
    <property type="entry name" value="Peptidyl-tRNA hydrolase-like"/>
    <property type="match status" value="1"/>
</dbReference>
<dbReference type="PROSITE" id="PS01195">
    <property type="entry name" value="PEPT_TRNA_HYDROL_1"/>
    <property type="match status" value="1"/>
</dbReference>
<dbReference type="PROSITE" id="PS01196">
    <property type="entry name" value="PEPT_TRNA_HYDROL_2"/>
    <property type="match status" value="1"/>
</dbReference>
<comment type="function">
    <text evidence="1">Hydrolyzes ribosome-free peptidyl-tRNAs (with 1 or more amino acids incorporated), which drop off the ribosome during protein synthesis, or as a result of ribosome stalling.</text>
</comment>
<comment type="function">
    <text evidence="1">Catalyzes the release of premature peptidyl moieties from peptidyl-tRNA molecules trapped in stalled 50S ribosomal subunits, and thus maintains levels of free tRNAs and 50S ribosomes.</text>
</comment>
<comment type="catalytic activity">
    <reaction evidence="1">
        <text>an N-acyl-L-alpha-aminoacyl-tRNA + H2O = an N-acyl-L-amino acid + a tRNA + H(+)</text>
        <dbReference type="Rhea" id="RHEA:54448"/>
        <dbReference type="Rhea" id="RHEA-COMP:10123"/>
        <dbReference type="Rhea" id="RHEA-COMP:13883"/>
        <dbReference type="ChEBI" id="CHEBI:15377"/>
        <dbReference type="ChEBI" id="CHEBI:15378"/>
        <dbReference type="ChEBI" id="CHEBI:59874"/>
        <dbReference type="ChEBI" id="CHEBI:78442"/>
        <dbReference type="ChEBI" id="CHEBI:138191"/>
        <dbReference type="EC" id="3.1.1.29"/>
    </reaction>
</comment>
<comment type="subunit">
    <text evidence="1">Monomer.</text>
</comment>
<comment type="subcellular location">
    <subcellularLocation>
        <location evidence="1">Cytoplasm</location>
    </subcellularLocation>
</comment>
<comment type="similarity">
    <text evidence="1">Belongs to the PTH family.</text>
</comment>
<proteinExistence type="inferred from homology"/>
<protein>
    <recommendedName>
        <fullName evidence="1">Peptidyl-tRNA hydrolase</fullName>
        <shortName evidence="1">Pth</shortName>
        <ecNumber evidence="1">3.1.1.29</ecNumber>
    </recommendedName>
</protein>
<sequence length="189" mass="21259">MTRLIIGLGNPGDRYFETKHNVGFMLLDKIAKRENVTFNHDKIFQADIATTFIDGEKIYLVKPTTFMNESGKAVHALMTYYGLDATDILVAYDDLDMAVGKIRFRQKGSAGGHNGIKSIVKHIGTQEFDRIKIGIGRPKGKMSVVNHVLSGFDIEDRIEIDLALDKLDKAVNVYLEEDDFDTVMRKFNG</sequence>
<organism>
    <name type="scientific">Streptococcus suis (strain 98HAH33)</name>
    <dbReference type="NCBI Taxonomy" id="391296"/>
    <lineage>
        <taxon>Bacteria</taxon>
        <taxon>Bacillati</taxon>
        <taxon>Bacillota</taxon>
        <taxon>Bacilli</taxon>
        <taxon>Lactobacillales</taxon>
        <taxon>Streptococcaceae</taxon>
        <taxon>Streptococcus</taxon>
    </lineage>
</organism>
<feature type="chain" id="PRO_1000010657" description="Peptidyl-tRNA hydrolase">
    <location>
        <begin position="1"/>
        <end position="189"/>
    </location>
</feature>
<feature type="active site" description="Proton acceptor" evidence="1">
    <location>
        <position position="20"/>
    </location>
</feature>
<feature type="binding site" evidence="1">
    <location>
        <position position="15"/>
    </location>
    <ligand>
        <name>tRNA</name>
        <dbReference type="ChEBI" id="CHEBI:17843"/>
    </ligand>
</feature>
<feature type="binding site" evidence="1">
    <location>
        <position position="66"/>
    </location>
    <ligand>
        <name>tRNA</name>
        <dbReference type="ChEBI" id="CHEBI:17843"/>
    </ligand>
</feature>
<feature type="binding site" evidence="1">
    <location>
        <position position="68"/>
    </location>
    <ligand>
        <name>tRNA</name>
        <dbReference type="ChEBI" id="CHEBI:17843"/>
    </ligand>
</feature>
<feature type="binding site" evidence="1">
    <location>
        <position position="114"/>
    </location>
    <ligand>
        <name>tRNA</name>
        <dbReference type="ChEBI" id="CHEBI:17843"/>
    </ligand>
</feature>
<feature type="site" description="Discriminates between blocked and unblocked aminoacyl-tRNA" evidence="1">
    <location>
        <position position="10"/>
    </location>
</feature>
<feature type="site" description="Stabilizes the basic form of H active site to accept a proton" evidence="1">
    <location>
        <position position="93"/>
    </location>
</feature>